<accession>Q65JK2</accession>
<accession>Q62V07</accession>
<name>CHED_BACLD</name>
<protein>
    <recommendedName>
        <fullName evidence="2">Chemoreceptor glutamine deamidase CheD</fullName>
        <ecNumber evidence="2">3.5.1.44</ecNumber>
    </recommendedName>
</protein>
<keyword id="KW-0145">Chemotaxis</keyword>
<keyword id="KW-0378">Hydrolase</keyword>
<keyword id="KW-1185">Reference proteome</keyword>
<reference key="1">
    <citation type="journal article" date="2004" name="J. Mol. Microbiol. Biotechnol.">
        <title>The complete genome sequence of Bacillus licheniformis DSM13, an organism with great industrial potential.</title>
        <authorList>
            <person name="Veith B."/>
            <person name="Herzberg C."/>
            <person name="Steckel S."/>
            <person name="Feesche J."/>
            <person name="Maurer K.H."/>
            <person name="Ehrenreich P."/>
            <person name="Baeumer S."/>
            <person name="Henne A."/>
            <person name="Liesegang H."/>
            <person name="Merkl R."/>
            <person name="Ehrenreich A."/>
            <person name="Gottschalk G."/>
        </authorList>
    </citation>
    <scope>NUCLEOTIDE SEQUENCE [LARGE SCALE GENOMIC DNA]</scope>
    <source>
        <strain>ATCC 14580 / DSM 13 / JCM 2505 / CCUG 7422 / NBRC 12200 / NCIMB 9375 / NCTC 10341 / NRRL NRS-1264 / Gibson 46</strain>
    </source>
</reference>
<reference key="2">
    <citation type="journal article" date="2004" name="Genome Biol.">
        <title>Complete genome sequence of the industrial bacterium Bacillus licheniformis and comparisons with closely related Bacillus species.</title>
        <authorList>
            <person name="Rey M.W."/>
            <person name="Ramaiya P."/>
            <person name="Nelson B.A."/>
            <person name="Brody-Karpin S.D."/>
            <person name="Zaretsky E.J."/>
            <person name="Tang M."/>
            <person name="Lopez de Leon A."/>
            <person name="Xiang H."/>
            <person name="Gusti V."/>
            <person name="Clausen I.G."/>
            <person name="Olsen P.B."/>
            <person name="Rasmussen M.D."/>
            <person name="Andersen J.T."/>
            <person name="Joergensen P.L."/>
            <person name="Larsen T.S."/>
            <person name="Sorokin A."/>
            <person name="Bolotin A."/>
            <person name="Lapidus A."/>
            <person name="Galleron N."/>
            <person name="Ehrlich S.D."/>
            <person name="Berka R.M."/>
        </authorList>
    </citation>
    <scope>NUCLEOTIDE SEQUENCE [LARGE SCALE GENOMIC DNA]</scope>
    <source>
        <strain>ATCC 14580 / DSM 13 / JCM 2505 / CCUG 7422 / NBRC 12200 / NCIMB 9375 / NCTC 10341 / NRRL NRS-1264 / Gibson 46</strain>
    </source>
</reference>
<gene>
    <name evidence="2" type="primary">cheD</name>
    <name type="ordered locus">BLi01867</name>
    <name type="ordered locus">BL01247</name>
</gene>
<dbReference type="EC" id="3.5.1.44" evidence="2"/>
<dbReference type="EMBL" id="AE017333">
    <property type="protein sequence ID" value="AAU40762.1"/>
    <property type="molecule type" value="Genomic_DNA"/>
</dbReference>
<dbReference type="EMBL" id="CP000002">
    <property type="protein sequence ID" value="AAU23402.1"/>
    <property type="molecule type" value="Genomic_DNA"/>
</dbReference>
<dbReference type="RefSeq" id="WP_003181820.1">
    <property type="nucleotide sequence ID" value="NC_006322.1"/>
</dbReference>
<dbReference type="SMR" id="Q65JK2"/>
<dbReference type="STRING" id="279010.BL01247"/>
<dbReference type="KEGG" id="bld:BLi01867"/>
<dbReference type="KEGG" id="bli:BL01247"/>
<dbReference type="eggNOG" id="COG1871">
    <property type="taxonomic scope" value="Bacteria"/>
</dbReference>
<dbReference type="HOGENOM" id="CLU_087854_2_0_9"/>
<dbReference type="Proteomes" id="UP000000606">
    <property type="component" value="Chromosome"/>
</dbReference>
<dbReference type="GO" id="GO:0050568">
    <property type="term" value="F:protein-glutamine glutaminase activity"/>
    <property type="evidence" value="ECO:0007669"/>
    <property type="project" value="UniProtKB-UniRule"/>
</dbReference>
<dbReference type="GO" id="GO:0006935">
    <property type="term" value="P:chemotaxis"/>
    <property type="evidence" value="ECO:0007669"/>
    <property type="project" value="UniProtKB-UniRule"/>
</dbReference>
<dbReference type="CDD" id="cd16352">
    <property type="entry name" value="CheD"/>
    <property type="match status" value="1"/>
</dbReference>
<dbReference type="Gene3D" id="3.30.1330.200">
    <property type="match status" value="1"/>
</dbReference>
<dbReference type="HAMAP" id="MF_01440">
    <property type="entry name" value="CheD"/>
    <property type="match status" value="1"/>
</dbReference>
<dbReference type="InterPro" id="IPR038592">
    <property type="entry name" value="CheD-like_sf"/>
</dbReference>
<dbReference type="InterPro" id="IPR005659">
    <property type="entry name" value="Chemorcpt_Glu_NH3ase_CheD"/>
</dbReference>
<dbReference type="InterPro" id="IPR011324">
    <property type="entry name" value="Cytotoxic_necrot_fac-like_cat"/>
</dbReference>
<dbReference type="PANTHER" id="PTHR35147">
    <property type="entry name" value="CHEMORECEPTOR GLUTAMINE DEAMIDASE CHED-RELATED"/>
    <property type="match status" value="1"/>
</dbReference>
<dbReference type="PANTHER" id="PTHR35147:SF1">
    <property type="entry name" value="CHEMORECEPTOR GLUTAMINE DEAMIDASE CHED-RELATED"/>
    <property type="match status" value="1"/>
</dbReference>
<dbReference type="Pfam" id="PF03975">
    <property type="entry name" value="CheD"/>
    <property type="match status" value="1"/>
</dbReference>
<dbReference type="SUPFAM" id="SSF64438">
    <property type="entry name" value="CNF1/YfiH-like putative cysteine hydrolases"/>
    <property type="match status" value="1"/>
</dbReference>
<sequence length="168" mass="18130">MKILEKETSIIRVGIADVKIVRTPDKIRTSGLGSCVGLVLYDLEAKTAGLVHVMLPDSSLSKTPDINVAKYADTAVEATVKMLLEAGCRKYALKAKMAGGAEMFKFKMTNDLMKVGPRNVLAIKKHLSLLNIPIVSEDTGGNSGRTIEFDPQSAELVIRTVKQGVTTI</sequence>
<feature type="chain" id="PRO_0000251004" description="Chemoreceptor glutamine deamidase CheD">
    <location>
        <begin position="1"/>
        <end position="168"/>
    </location>
</feature>
<proteinExistence type="inferred from homology"/>
<evidence type="ECO:0000250" key="1"/>
<evidence type="ECO:0000255" key="2">
    <source>
        <dbReference type="HAMAP-Rule" id="MF_01440"/>
    </source>
</evidence>
<organism>
    <name type="scientific">Bacillus licheniformis (strain ATCC 14580 / DSM 13 / JCM 2505 / CCUG 7422 / NBRC 12200 / NCIMB 9375 / NCTC 10341 / NRRL NRS-1264 / Gibson 46)</name>
    <dbReference type="NCBI Taxonomy" id="279010"/>
    <lineage>
        <taxon>Bacteria</taxon>
        <taxon>Bacillati</taxon>
        <taxon>Bacillota</taxon>
        <taxon>Bacilli</taxon>
        <taxon>Bacillales</taxon>
        <taxon>Bacillaceae</taxon>
        <taxon>Bacillus</taxon>
    </lineage>
</organism>
<comment type="function">
    <text evidence="1">Deamidates glutamine residues to glutamate on methyl-accepting chemotaxis receptors (MCPs). CheD-mediated MCP deamidation is required for productive communication of the conformational signals of the chemoreceptors to the CheA kinase (By similarity).</text>
</comment>
<comment type="catalytic activity">
    <reaction evidence="2">
        <text>L-glutaminyl-[protein] + H2O = L-glutamyl-[protein] + NH4(+)</text>
        <dbReference type="Rhea" id="RHEA:16441"/>
        <dbReference type="Rhea" id="RHEA-COMP:10207"/>
        <dbReference type="Rhea" id="RHEA-COMP:10208"/>
        <dbReference type="ChEBI" id="CHEBI:15377"/>
        <dbReference type="ChEBI" id="CHEBI:28938"/>
        <dbReference type="ChEBI" id="CHEBI:29973"/>
        <dbReference type="ChEBI" id="CHEBI:30011"/>
        <dbReference type="EC" id="3.5.1.44"/>
    </reaction>
</comment>
<comment type="subunit">
    <text evidence="2">Forms a complex with CheC.</text>
</comment>
<comment type="similarity">
    <text evidence="2">Belongs to the CheD family.</text>
</comment>